<dbReference type="EMBL" id="CP000050">
    <property type="protein sequence ID" value="AAY51221.1"/>
    <property type="molecule type" value="Genomic_DNA"/>
</dbReference>
<dbReference type="RefSeq" id="WP_011039161.1">
    <property type="nucleotide sequence ID" value="NZ_CP155948.1"/>
</dbReference>
<dbReference type="SMR" id="Q4UP02"/>
<dbReference type="KEGG" id="xcb:XC_4183"/>
<dbReference type="HOGENOM" id="CLU_086034_1_1_6"/>
<dbReference type="Proteomes" id="UP000000420">
    <property type="component" value="Chromosome"/>
</dbReference>
<dbReference type="GO" id="GO:0033281">
    <property type="term" value="C:TAT protein transport complex"/>
    <property type="evidence" value="ECO:0007669"/>
    <property type="project" value="UniProtKB-UniRule"/>
</dbReference>
<dbReference type="GO" id="GO:0008320">
    <property type="term" value="F:protein transmembrane transporter activity"/>
    <property type="evidence" value="ECO:0007669"/>
    <property type="project" value="UniProtKB-UniRule"/>
</dbReference>
<dbReference type="GO" id="GO:0043953">
    <property type="term" value="P:protein transport by the Tat complex"/>
    <property type="evidence" value="ECO:0007669"/>
    <property type="project" value="UniProtKB-UniRule"/>
</dbReference>
<dbReference type="Gene3D" id="1.20.5.3310">
    <property type="match status" value="1"/>
</dbReference>
<dbReference type="HAMAP" id="MF_00237">
    <property type="entry name" value="TatB"/>
    <property type="match status" value="1"/>
</dbReference>
<dbReference type="InterPro" id="IPR003369">
    <property type="entry name" value="TatA/B/E"/>
</dbReference>
<dbReference type="InterPro" id="IPR018448">
    <property type="entry name" value="TatB"/>
</dbReference>
<dbReference type="NCBIfam" id="NF003400">
    <property type="entry name" value="PRK04654.1"/>
    <property type="match status" value="1"/>
</dbReference>
<dbReference type="NCBIfam" id="TIGR01410">
    <property type="entry name" value="tatB"/>
    <property type="match status" value="1"/>
</dbReference>
<dbReference type="PANTHER" id="PTHR33162">
    <property type="entry name" value="SEC-INDEPENDENT PROTEIN TRANSLOCASE PROTEIN TATA, CHLOROPLASTIC"/>
    <property type="match status" value="1"/>
</dbReference>
<dbReference type="PANTHER" id="PTHR33162:SF1">
    <property type="entry name" value="SEC-INDEPENDENT PROTEIN TRANSLOCASE PROTEIN TATA, CHLOROPLASTIC"/>
    <property type="match status" value="1"/>
</dbReference>
<dbReference type="Pfam" id="PF02416">
    <property type="entry name" value="TatA_B_E"/>
    <property type="match status" value="1"/>
</dbReference>
<dbReference type="PRINTS" id="PR01506">
    <property type="entry name" value="TATBPROTEIN"/>
</dbReference>
<gene>
    <name evidence="1" type="primary">tatB</name>
    <name type="ordered locus">XC_4183</name>
</gene>
<keyword id="KW-0997">Cell inner membrane</keyword>
<keyword id="KW-1003">Cell membrane</keyword>
<keyword id="KW-0472">Membrane</keyword>
<keyword id="KW-0653">Protein transport</keyword>
<keyword id="KW-0811">Translocation</keyword>
<keyword id="KW-0812">Transmembrane</keyword>
<keyword id="KW-1133">Transmembrane helix</keyword>
<keyword id="KW-0813">Transport</keyword>
<sequence>MFDIGFSELALIAVVALVVLGPERLPKAARFAGLWVRRARMQWDSVKQELERELEAEELKRSLQDVQASLREAEGQLRNTQQQVEDGARGLHDQARELHDEVGRDIDIRTSATPLAAPLELQADAPVVLEPGSAQPHTPVPAPAPVVAQAQPMAPAPKQTLVPAPHGSLTSTQVTTHAPTASATASSTSPQEKTP</sequence>
<accession>Q4UP02</accession>
<feature type="chain" id="PRO_0000301248" description="Sec-independent protein translocase protein TatB">
    <location>
        <begin position="1"/>
        <end position="195"/>
    </location>
</feature>
<feature type="transmembrane region" description="Helical" evidence="1">
    <location>
        <begin position="1"/>
        <end position="21"/>
    </location>
</feature>
<feature type="region of interest" description="Disordered" evidence="2">
    <location>
        <begin position="130"/>
        <end position="195"/>
    </location>
</feature>
<feature type="compositionally biased region" description="Low complexity" evidence="2">
    <location>
        <begin position="145"/>
        <end position="157"/>
    </location>
</feature>
<feature type="compositionally biased region" description="Low complexity" evidence="2">
    <location>
        <begin position="175"/>
        <end position="195"/>
    </location>
</feature>
<reference key="1">
    <citation type="journal article" date="2005" name="Genome Res.">
        <title>Comparative and functional genomic analyses of the pathogenicity of phytopathogen Xanthomonas campestris pv. campestris.</title>
        <authorList>
            <person name="Qian W."/>
            <person name="Jia Y."/>
            <person name="Ren S.-X."/>
            <person name="He Y.-Q."/>
            <person name="Feng J.-X."/>
            <person name="Lu L.-F."/>
            <person name="Sun Q."/>
            <person name="Ying G."/>
            <person name="Tang D.-J."/>
            <person name="Tang H."/>
            <person name="Wu W."/>
            <person name="Hao P."/>
            <person name="Wang L."/>
            <person name="Jiang B.-L."/>
            <person name="Zeng S."/>
            <person name="Gu W.-Y."/>
            <person name="Lu G."/>
            <person name="Rong L."/>
            <person name="Tian Y."/>
            <person name="Yao Z."/>
            <person name="Fu G."/>
            <person name="Chen B."/>
            <person name="Fang R."/>
            <person name="Qiang B."/>
            <person name="Chen Z."/>
            <person name="Zhao G.-P."/>
            <person name="Tang J.-L."/>
            <person name="He C."/>
        </authorList>
    </citation>
    <scope>NUCLEOTIDE SEQUENCE [LARGE SCALE GENOMIC DNA]</scope>
    <source>
        <strain>8004</strain>
    </source>
</reference>
<comment type="function">
    <text evidence="1">Part of the twin-arginine translocation (Tat) system that transports large folded proteins containing a characteristic twin-arginine motif in their signal peptide across membranes. Together with TatC, TatB is part of a receptor directly interacting with Tat signal peptides. TatB may form an oligomeric binding site that transiently accommodates folded Tat precursor proteins before their translocation.</text>
</comment>
<comment type="subunit">
    <text evidence="1">The Tat system comprises two distinct complexes: a TatABC complex, containing multiple copies of TatA, TatB and TatC subunits, and a separate TatA complex, containing only TatA subunits. Substrates initially bind to the TatABC complex, which probably triggers association of the separate TatA complex to form the active translocon.</text>
</comment>
<comment type="subcellular location">
    <subcellularLocation>
        <location evidence="1">Cell inner membrane</location>
        <topology evidence="1">Single-pass membrane protein</topology>
    </subcellularLocation>
</comment>
<comment type="similarity">
    <text evidence="1">Belongs to the TatB family.</text>
</comment>
<organism>
    <name type="scientific">Xanthomonas campestris pv. campestris (strain 8004)</name>
    <dbReference type="NCBI Taxonomy" id="314565"/>
    <lineage>
        <taxon>Bacteria</taxon>
        <taxon>Pseudomonadati</taxon>
        <taxon>Pseudomonadota</taxon>
        <taxon>Gammaproteobacteria</taxon>
        <taxon>Lysobacterales</taxon>
        <taxon>Lysobacteraceae</taxon>
        <taxon>Xanthomonas</taxon>
    </lineage>
</organism>
<proteinExistence type="inferred from homology"/>
<protein>
    <recommendedName>
        <fullName evidence="1">Sec-independent protein translocase protein TatB</fullName>
    </recommendedName>
</protein>
<name>TATB_XANC8</name>
<evidence type="ECO:0000255" key="1">
    <source>
        <dbReference type="HAMAP-Rule" id="MF_00237"/>
    </source>
</evidence>
<evidence type="ECO:0000256" key="2">
    <source>
        <dbReference type="SAM" id="MobiDB-lite"/>
    </source>
</evidence>